<comment type="similarity">
    <text evidence="2">Belongs to the 14-3-3 family.</text>
</comment>
<protein>
    <recommendedName>
        <fullName>14-3-3-like protein</fullName>
    </recommendedName>
</protein>
<feature type="chain" id="PRO_0000058695" description="14-3-3-like protein">
    <location>
        <begin position="1"/>
        <end position="260"/>
    </location>
</feature>
<feature type="region of interest" description="Disordered" evidence="1">
    <location>
        <begin position="240"/>
        <end position="260"/>
    </location>
</feature>
<feature type="compositionally biased region" description="Basic and acidic residues" evidence="1">
    <location>
        <begin position="247"/>
        <end position="260"/>
    </location>
</feature>
<organism>
    <name type="scientific">Oenothera elata subsp. hookeri</name>
    <name type="common">Hooker's evening primrose</name>
    <name type="synonym">Oenothera hookeri</name>
    <dbReference type="NCBI Taxonomy" id="85636"/>
    <lineage>
        <taxon>Eukaryota</taxon>
        <taxon>Viridiplantae</taxon>
        <taxon>Streptophyta</taxon>
        <taxon>Embryophyta</taxon>
        <taxon>Tracheophyta</taxon>
        <taxon>Spermatophyta</taxon>
        <taxon>Magnoliopsida</taxon>
        <taxon>eudicotyledons</taxon>
        <taxon>Gunneridae</taxon>
        <taxon>Pentapetalae</taxon>
        <taxon>rosids</taxon>
        <taxon>malvids</taxon>
        <taxon>Myrtales</taxon>
        <taxon>Onagraceae</taxon>
        <taxon>Onagroideae</taxon>
        <taxon>Onagreae</taxon>
        <taxon>Oenothera</taxon>
    </lineage>
</organism>
<dbReference type="EMBL" id="X62838">
    <property type="protein sequence ID" value="CAA44642.1"/>
    <property type="molecule type" value="mRNA"/>
</dbReference>
<dbReference type="PIR" id="S20580">
    <property type="entry name" value="S20580"/>
</dbReference>
<dbReference type="SMR" id="P29307"/>
<dbReference type="FunFam" id="1.20.190.20:FF:000002">
    <property type="entry name" value="14-3-3 protein epsilon"/>
    <property type="match status" value="1"/>
</dbReference>
<dbReference type="Gene3D" id="1.20.190.20">
    <property type="entry name" value="14-3-3 domain"/>
    <property type="match status" value="1"/>
</dbReference>
<dbReference type="InterPro" id="IPR000308">
    <property type="entry name" value="14-3-3"/>
</dbReference>
<dbReference type="InterPro" id="IPR023409">
    <property type="entry name" value="14-3-3_CS"/>
</dbReference>
<dbReference type="InterPro" id="IPR036815">
    <property type="entry name" value="14-3-3_dom_sf"/>
</dbReference>
<dbReference type="InterPro" id="IPR023410">
    <property type="entry name" value="14-3-3_domain"/>
</dbReference>
<dbReference type="PANTHER" id="PTHR18860">
    <property type="entry name" value="14-3-3 PROTEIN"/>
    <property type="match status" value="1"/>
</dbReference>
<dbReference type="Pfam" id="PF00244">
    <property type="entry name" value="14-3-3"/>
    <property type="match status" value="1"/>
</dbReference>
<dbReference type="PIRSF" id="PIRSF000868">
    <property type="entry name" value="14-3-3"/>
    <property type="match status" value="1"/>
</dbReference>
<dbReference type="PRINTS" id="PR00305">
    <property type="entry name" value="1433ZETA"/>
</dbReference>
<dbReference type="SMART" id="SM00101">
    <property type="entry name" value="14_3_3"/>
    <property type="match status" value="1"/>
</dbReference>
<dbReference type="SUPFAM" id="SSF48445">
    <property type="entry name" value="14-3-3 protein"/>
    <property type="match status" value="1"/>
</dbReference>
<dbReference type="PROSITE" id="PS00796">
    <property type="entry name" value="1433_1"/>
    <property type="match status" value="1"/>
</dbReference>
<dbReference type="PROSITE" id="PS00797">
    <property type="entry name" value="1433_2"/>
    <property type="match status" value="1"/>
</dbReference>
<evidence type="ECO:0000256" key="1">
    <source>
        <dbReference type="SAM" id="MobiDB-lite"/>
    </source>
</evidence>
<evidence type="ECO:0000305" key="2"/>
<accession>P29307</accession>
<proteinExistence type="evidence at transcript level"/>
<name>1433_OENEH</name>
<sequence>MATAPSPREENVYLAKLAEQAERYEEMVEFMEKVCAAADSEELTVEERNLLSVAYKNVIGARRASWRIISSIEQKEESRGNDDHVSTIRDYRSKIETELSNICGGILKLLDSRLIPSAASGDSKVFYLKMKGDYHRYLAEFKTGAERKEAAESTLSAYKAAQDIANAELAPTHPIRLGLALNFSVFYYEILNSPDRACNLANEAFDEAIAELDTLEEESYKDSTLIMQLLRDNLTLWTSDMQDDGGDEIKEAAPKPDEQY</sequence>
<reference key="1">
    <citation type="journal article" date="1992" name="FEBS Lett.">
        <title>A plant homologue to mammalian brain 14-3-3 protein and protein kinase C inhibitor.</title>
        <authorList>
            <person name="Hirsch S."/>
            <person name="Aitken A."/>
            <person name="Bertsch U."/>
            <person name="Soll J."/>
        </authorList>
    </citation>
    <scope>NUCLEOTIDE SEQUENCE [MRNA]</scope>
</reference>